<reference key="1">
    <citation type="journal article" date="2000" name="DNA Res.">
        <title>Structural analysis of Arabidopsis thaliana chromosome 3. I. Sequence features of the regions of 4,504,864 bp covered by sixty P1 and TAC clones.</title>
        <authorList>
            <person name="Sato S."/>
            <person name="Nakamura Y."/>
            <person name="Kaneko T."/>
            <person name="Katoh T."/>
            <person name="Asamizu E."/>
            <person name="Tabata S."/>
        </authorList>
    </citation>
    <scope>NUCLEOTIDE SEQUENCE [LARGE SCALE GENOMIC DNA]</scope>
    <source>
        <strain>cv. Columbia</strain>
    </source>
</reference>
<reference key="2">
    <citation type="journal article" date="2017" name="Plant J.">
        <title>Araport11: a complete reannotation of the Arabidopsis thaliana reference genome.</title>
        <authorList>
            <person name="Cheng C.Y."/>
            <person name="Krishnakumar V."/>
            <person name="Chan A.P."/>
            <person name="Thibaud-Nissen F."/>
            <person name="Schobel S."/>
            <person name="Town C.D."/>
        </authorList>
    </citation>
    <scope>GENOME REANNOTATION</scope>
    <source>
        <strain>cv. Columbia</strain>
    </source>
</reference>
<reference key="3">
    <citation type="journal article" date="2003" name="Science">
        <title>Empirical analysis of transcriptional activity in the Arabidopsis genome.</title>
        <authorList>
            <person name="Yamada K."/>
            <person name="Lim J."/>
            <person name="Dale J.M."/>
            <person name="Chen H."/>
            <person name="Shinn P."/>
            <person name="Palm C.J."/>
            <person name="Southwick A.M."/>
            <person name="Wu H.C."/>
            <person name="Kim C.J."/>
            <person name="Nguyen M."/>
            <person name="Pham P.K."/>
            <person name="Cheuk R.F."/>
            <person name="Karlin-Newmann G."/>
            <person name="Liu S.X."/>
            <person name="Lam B."/>
            <person name="Sakano H."/>
            <person name="Wu T."/>
            <person name="Yu G."/>
            <person name="Miranda M."/>
            <person name="Quach H.L."/>
            <person name="Tripp M."/>
            <person name="Chang C.H."/>
            <person name="Lee J.M."/>
            <person name="Toriumi M.J."/>
            <person name="Chan M.M."/>
            <person name="Tang C.C."/>
            <person name="Onodera C.S."/>
            <person name="Deng J.M."/>
            <person name="Akiyama K."/>
            <person name="Ansari Y."/>
            <person name="Arakawa T."/>
            <person name="Banh J."/>
            <person name="Banno F."/>
            <person name="Bowser L."/>
            <person name="Brooks S.Y."/>
            <person name="Carninci P."/>
            <person name="Chao Q."/>
            <person name="Choy N."/>
            <person name="Enju A."/>
            <person name="Goldsmith A.D."/>
            <person name="Gurjal M."/>
            <person name="Hansen N.F."/>
            <person name="Hayashizaki Y."/>
            <person name="Johnson-Hopson C."/>
            <person name="Hsuan V.W."/>
            <person name="Iida K."/>
            <person name="Karnes M."/>
            <person name="Khan S."/>
            <person name="Koesema E."/>
            <person name="Ishida J."/>
            <person name="Jiang P.X."/>
            <person name="Jones T."/>
            <person name="Kawai J."/>
            <person name="Kamiya A."/>
            <person name="Meyers C."/>
            <person name="Nakajima M."/>
            <person name="Narusaka M."/>
            <person name="Seki M."/>
            <person name="Sakurai T."/>
            <person name="Satou M."/>
            <person name="Tamse R."/>
            <person name="Vaysberg M."/>
            <person name="Wallender E.K."/>
            <person name="Wong C."/>
            <person name="Yamamura Y."/>
            <person name="Yuan S."/>
            <person name="Shinozaki K."/>
            <person name="Davis R.W."/>
            <person name="Theologis A."/>
            <person name="Ecker J.R."/>
        </authorList>
    </citation>
    <scope>NUCLEOTIDE SEQUENCE [LARGE SCALE MRNA]</scope>
    <source>
        <strain>cv. Columbia</strain>
    </source>
</reference>
<reference key="4">
    <citation type="journal article" date="2006" name="Plant Cell">
        <title>Arabidopsis ribonucleotide reductases are critical for cell cycle progression, DNA damage repair, and plant development.</title>
        <authorList>
            <person name="Wang C."/>
            <person name="Liu Z."/>
        </authorList>
    </citation>
    <scope>TISSUE SPECIFICITY</scope>
    <scope>FUNCTION</scope>
    <scope>MUTAGENESIS OF ASP-49; ARG-97 AND GLY-170</scope>
    <scope>DEVELOPMENTAL STAGE</scope>
    <source>
        <strain>cv. Landsberg erecta</strain>
    </source>
</reference>
<reference key="5">
    <citation type="journal article" date="2011" name="Plant Mol. Biol.">
        <title>COP9 signalosome subunit 7 from Arabidopsis interacts with and regulates the small subunit of ribonucleotide reductase (RNR2).</title>
        <authorList>
            <person name="Halimi Y."/>
            <person name="Dessau M."/>
            <person name="Pollak S."/>
            <person name="Ast T."/>
            <person name="Erez T."/>
            <person name="Livnat-Levanon N."/>
            <person name="Karniol B."/>
            <person name="Hirsch J.A."/>
            <person name="Chamovitz D.A."/>
        </authorList>
    </citation>
    <scope>INTERACTION WITH CSN7</scope>
    <scope>SUBCELLULAR LOCATION</scope>
    <scope>SUBUNIT</scope>
    <scope>TISSUE SPECIFICITY</scope>
    <scope>DISRUPTION PHENOTYPE</scope>
</reference>
<dbReference type="EC" id="1.17.4.1"/>
<dbReference type="EMBL" id="AB026649">
    <property type="protein sequence ID" value="BAB01087.1"/>
    <property type="molecule type" value="Genomic_DNA"/>
</dbReference>
<dbReference type="EMBL" id="CP002686">
    <property type="protein sequence ID" value="AEE77261.1"/>
    <property type="molecule type" value="Genomic_DNA"/>
</dbReference>
<dbReference type="EMBL" id="AY063837">
    <property type="protein sequence ID" value="AAL36193.1"/>
    <property type="molecule type" value="mRNA"/>
</dbReference>
<dbReference type="EMBL" id="AY117212">
    <property type="protein sequence ID" value="AAM51287.1"/>
    <property type="molecule type" value="mRNA"/>
</dbReference>
<dbReference type="RefSeq" id="NP_189342.1">
    <property type="nucleotide sequence ID" value="NM_113620.4"/>
</dbReference>
<dbReference type="SMR" id="Q9LSD0"/>
<dbReference type="BioGRID" id="7654">
    <property type="interactions" value="1"/>
</dbReference>
<dbReference type="FunCoup" id="Q9LSD0">
    <property type="interactions" value="1879"/>
</dbReference>
<dbReference type="STRING" id="3702.Q9LSD0"/>
<dbReference type="PaxDb" id="3702-AT3G27060.1"/>
<dbReference type="ProteomicsDB" id="236867"/>
<dbReference type="EnsemblPlants" id="AT3G27060.1">
    <property type="protein sequence ID" value="AT3G27060.1"/>
    <property type="gene ID" value="AT3G27060"/>
</dbReference>
<dbReference type="GeneID" id="822324"/>
<dbReference type="Gramene" id="AT3G27060.1">
    <property type="protein sequence ID" value="AT3G27060.1"/>
    <property type="gene ID" value="AT3G27060"/>
</dbReference>
<dbReference type="KEGG" id="ath:AT3G27060"/>
<dbReference type="Araport" id="AT3G27060"/>
<dbReference type="TAIR" id="AT3G27060">
    <property type="gene designation" value="TSO2"/>
</dbReference>
<dbReference type="eggNOG" id="KOG1567">
    <property type="taxonomic scope" value="Eukaryota"/>
</dbReference>
<dbReference type="HOGENOM" id="CLU_035339_2_1_1"/>
<dbReference type="InParanoid" id="Q9LSD0"/>
<dbReference type="OMA" id="SNPFPWM"/>
<dbReference type="OrthoDB" id="10248373at2759"/>
<dbReference type="PhylomeDB" id="Q9LSD0"/>
<dbReference type="BioCyc" id="ARA:AT3G27060-MONOMER"/>
<dbReference type="BRENDA" id="1.17.4.1">
    <property type="organism ID" value="399"/>
</dbReference>
<dbReference type="BRENDA" id="1.17.4.2">
    <property type="organism ID" value="399"/>
</dbReference>
<dbReference type="PRO" id="PR:Q9LSD0"/>
<dbReference type="Proteomes" id="UP000006548">
    <property type="component" value="Chromosome 3"/>
</dbReference>
<dbReference type="ExpressionAtlas" id="Q9LSD0">
    <property type="expression patterns" value="baseline and differential"/>
</dbReference>
<dbReference type="GO" id="GO:0005737">
    <property type="term" value="C:cytoplasm"/>
    <property type="evidence" value="ECO:0007669"/>
    <property type="project" value="UniProtKB-SubCell"/>
</dbReference>
<dbReference type="GO" id="GO:0005634">
    <property type="term" value="C:nucleus"/>
    <property type="evidence" value="ECO:0007669"/>
    <property type="project" value="UniProtKB-SubCell"/>
</dbReference>
<dbReference type="GO" id="GO:0046872">
    <property type="term" value="F:metal ion binding"/>
    <property type="evidence" value="ECO:0007669"/>
    <property type="project" value="UniProtKB-KW"/>
</dbReference>
<dbReference type="GO" id="GO:0004748">
    <property type="term" value="F:ribonucleoside-diphosphate reductase activity, thioredoxin disulfide as acceptor"/>
    <property type="evidence" value="ECO:0007669"/>
    <property type="project" value="UniProtKB-EC"/>
</dbReference>
<dbReference type="GO" id="GO:0009263">
    <property type="term" value="P:deoxyribonucleotide biosynthetic process"/>
    <property type="evidence" value="ECO:0007669"/>
    <property type="project" value="UniProtKB-KW"/>
</dbReference>
<dbReference type="GO" id="GO:0006281">
    <property type="term" value="P:DNA repair"/>
    <property type="evidence" value="ECO:0000304"/>
    <property type="project" value="TAIR"/>
</dbReference>
<dbReference type="GO" id="GO:0006260">
    <property type="term" value="P:DNA replication"/>
    <property type="evidence" value="ECO:0000315"/>
    <property type="project" value="TAIR"/>
</dbReference>
<dbReference type="GO" id="GO:0012501">
    <property type="term" value="P:programmed cell death"/>
    <property type="evidence" value="ECO:0000315"/>
    <property type="project" value="TAIR"/>
</dbReference>
<dbReference type="GO" id="GO:0051726">
    <property type="term" value="P:regulation of cell cycle"/>
    <property type="evidence" value="ECO:0000315"/>
    <property type="project" value="TAIR"/>
</dbReference>
<dbReference type="CDD" id="cd01049">
    <property type="entry name" value="RNRR2"/>
    <property type="match status" value="1"/>
</dbReference>
<dbReference type="FunFam" id="1.10.620.20:FF:000008">
    <property type="entry name" value="Ribonucleoside-diphosphate reductase"/>
    <property type="match status" value="1"/>
</dbReference>
<dbReference type="Gene3D" id="1.10.620.20">
    <property type="entry name" value="Ribonucleotide Reductase, subunit A"/>
    <property type="match status" value="1"/>
</dbReference>
<dbReference type="InterPro" id="IPR009078">
    <property type="entry name" value="Ferritin-like_SF"/>
</dbReference>
<dbReference type="InterPro" id="IPR012348">
    <property type="entry name" value="RNR-like"/>
</dbReference>
<dbReference type="InterPro" id="IPR033909">
    <property type="entry name" value="RNR_small"/>
</dbReference>
<dbReference type="InterPro" id="IPR030475">
    <property type="entry name" value="RNR_small_AS"/>
</dbReference>
<dbReference type="InterPro" id="IPR000358">
    <property type="entry name" value="RNR_small_fam"/>
</dbReference>
<dbReference type="PANTHER" id="PTHR23409">
    <property type="entry name" value="RIBONUCLEOSIDE-DIPHOSPHATE REDUCTASE SMALL CHAIN"/>
    <property type="match status" value="1"/>
</dbReference>
<dbReference type="PANTHER" id="PTHR23409:SF18">
    <property type="entry name" value="RIBONUCLEOSIDE-DIPHOSPHATE REDUCTASE SUBUNIT M2"/>
    <property type="match status" value="1"/>
</dbReference>
<dbReference type="Pfam" id="PF00268">
    <property type="entry name" value="Ribonuc_red_sm"/>
    <property type="match status" value="1"/>
</dbReference>
<dbReference type="SUPFAM" id="SSF47240">
    <property type="entry name" value="Ferritin-like"/>
    <property type="match status" value="1"/>
</dbReference>
<dbReference type="PROSITE" id="PS00368">
    <property type="entry name" value="RIBORED_SMALL"/>
    <property type="match status" value="1"/>
</dbReference>
<feature type="chain" id="PRO_0000254195" description="Ribonucleoside-diphosphate reductase small chain C">
    <location>
        <begin position="1"/>
        <end position="332"/>
    </location>
</feature>
<feature type="active site" evidence="2">
    <location>
        <position position="114"/>
    </location>
</feature>
<feature type="binding site" evidence="2">
    <location>
        <position position="76"/>
    </location>
    <ligand>
        <name>Fe cation</name>
        <dbReference type="ChEBI" id="CHEBI:24875"/>
        <label>1</label>
    </ligand>
</feature>
<feature type="binding site" evidence="2">
    <location>
        <position position="107"/>
    </location>
    <ligand>
        <name>Fe cation</name>
        <dbReference type="ChEBI" id="CHEBI:24875"/>
        <label>1</label>
    </ligand>
</feature>
<feature type="binding site" evidence="1">
    <location>
        <position position="107"/>
    </location>
    <ligand>
        <name>Fe cation</name>
        <dbReference type="ChEBI" id="CHEBI:24875"/>
        <label>2</label>
    </ligand>
</feature>
<feature type="binding site" evidence="2">
    <location>
        <position position="110"/>
    </location>
    <ligand>
        <name>Fe cation</name>
        <dbReference type="ChEBI" id="CHEBI:24875"/>
        <label>1</label>
    </ligand>
</feature>
<feature type="binding site" evidence="1">
    <location>
        <position position="169"/>
    </location>
    <ligand>
        <name>Fe cation</name>
        <dbReference type="ChEBI" id="CHEBI:24875"/>
        <label>2</label>
    </ligand>
</feature>
<feature type="binding site" evidence="1">
    <location>
        <position position="203"/>
    </location>
    <ligand>
        <name>Fe cation</name>
        <dbReference type="ChEBI" id="CHEBI:24875"/>
        <label>2</label>
    </ligand>
</feature>
<feature type="binding site" evidence="1">
    <location>
        <position position="206"/>
    </location>
    <ligand>
        <name>Fe cation</name>
        <dbReference type="ChEBI" id="CHEBI:24875"/>
        <label>2</label>
    </ligand>
</feature>
<feature type="mutagenesis site" description="In tso2-1,4; white sectors in green organs, uneven thickness, rough surfaces, and irregular margins of leaves or floral organs." evidence="3">
    <original>D</original>
    <variation>N</variation>
    <location>
        <position position="49"/>
    </location>
</feature>
<feature type="mutagenesis site" description="In tso2-3; white sectors in green organs, uneven thickness, rough surfaces, and irregular margins of leaves or floral organs." evidence="3">
    <original>R</original>
    <variation>C</variation>
    <location>
        <position position="97"/>
    </location>
</feature>
<feature type="mutagenesis site" description="In tso2-2; white sectors in green organs, uneven thickness, rough surfaces, and irregular margins of leaves or floral organs." evidence="3">
    <original>G</original>
    <variation>S</variation>
    <location>
        <position position="170"/>
    </location>
</feature>
<accession>Q9LSD0</accession>
<keyword id="KW-0963">Cytoplasm</keyword>
<keyword id="KW-0215">Deoxyribonucleotide synthesis</keyword>
<keyword id="KW-0408">Iron</keyword>
<keyword id="KW-0479">Metal-binding</keyword>
<keyword id="KW-0539">Nucleus</keyword>
<keyword id="KW-0560">Oxidoreductase</keyword>
<keyword id="KW-1185">Reference proteome</keyword>
<evidence type="ECO:0000250" key="1"/>
<evidence type="ECO:0000255" key="2">
    <source>
        <dbReference type="PROSITE-ProRule" id="PRU10014"/>
    </source>
</evidence>
<evidence type="ECO:0000269" key="3">
    <source>
    </source>
</evidence>
<evidence type="ECO:0000269" key="4">
    <source>
    </source>
</evidence>
<evidence type="ECO:0000305" key="5"/>
<sequence>MPSMPEEPLLTPTPDRFCMFPIHYPQIWEMYKKAEASFWTAEEVDLSQDNRDWENSLNDGERHFIKHVLAFFAASDGIVLENLASRFMSDVQVSEARAFYGFQIAIENIHSEMYSLLLDTYIKDNKERDHLFRAIETIPCVAKKAQWAMKWIDGSQTFAERIIAFACVEGIFFSGSFCSIFWLKKRGLMPGLTFSNELISRDEGLHCDFACLLYTLLKTKLSEERVKSIVCDAVEIEREFVCDALPCALVGMNRDLMSQYIEFVADRLLGALGYGKVYGVTNPFDWMELISLQGKTNFFEKRVGDYQKASVMSSVNGNGAFDNHVFSLDEDF</sequence>
<comment type="function">
    <text evidence="3">Provides the precursors necessary for DNA synthesis. Catalyzes the biosynthesis of deoxyribonucleotides from the corresponding ribonucleotides. Involved in DNA damage repair and programmed cell death inhibition.</text>
</comment>
<comment type="catalytic activity">
    <reaction evidence="2">
        <text>a 2'-deoxyribonucleoside 5'-diphosphate + [thioredoxin]-disulfide + H2O = a ribonucleoside 5'-diphosphate + [thioredoxin]-dithiol</text>
        <dbReference type="Rhea" id="RHEA:23252"/>
        <dbReference type="Rhea" id="RHEA-COMP:10698"/>
        <dbReference type="Rhea" id="RHEA-COMP:10700"/>
        <dbReference type="ChEBI" id="CHEBI:15377"/>
        <dbReference type="ChEBI" id="CHEBI:29950"/>
        <dbReference type="ChEBI" id="CHEBI:50058"/>
        <dbReference type="ChEBI" id="CHEBI:57930"/>
        <dbReference type="ChEBI" id="CHEBI:73316"/>
        <dbReference type="EC" id="1.17.4.1"/>
    </reaction>
</comment>
<comment type="cofactor">
    <cofactor evidence="1">
        <name>Fe cation</name>
        <dbReference type="ChEBI" id="CHEBI:24875"/>
    </cofactor>
    <text evidence="1">Binds 2 iron ions per subunit.</text>
</comment>
<comment type="subunit">
    <text evidence="1 4">Homodimer and heterodimer with RNR2A. Heterotetramer of two R1 and two R2 chains (By similarity). Interacts with CSN7 (via C-terminal tail).</text>
</comment>
<comment type="subcellular location">
    <subcellularLocation>
        <location evidence="4">Cytoplasm</location>
    </subcellularLocation>
    <subcellularLocation>
        <location evidence="4">Nucleus</location>
    </subcellularLocation>
    <text>Cytoplasmic in adult cells, and nuclear in meristematic regions and in all tissues following DNA damage. The nuclear exclusion is dependent on CSN7.</text>
</comment>
<comment type="tissue specificity">
    <text evidence="3 4">Expressed in roots, cauline and rosette leaves, stems and flowers.</text>
</comment>
<comment type="developmental stage">
    <text evidence="3">Expressed predominantly at the S-phase of the cell cycle.</text>
</comment>
<comment type="disruption phenotype">
    <text evidence="4">Embryo lethality when homozygous.</text>
</comment>
<comment type="miscellaneous">
    <text>'TSO' means 'ugly' in Chinese.</text>
</comment>
<comment type="similarity">
    <text evidence="5">Belongs to the ribonucleoside diphosphate reductase small chain family.</text>
</comment>
<protein>
    <recommendedName>
        <fullName>Ribonucleoside-diphosphate reductase small chain C</fullName>
        <ecNumber>1.17.4.1</ecNumber>
    </recommendedName>
    <alternativeName>
        <fullName>Ribonucleoside-diphosphate reductase TSO2 subunit</fullName>
    </alternativeName>
    <alternativeName>
        <fullName>Ribonucleotide reductase small subunit C</fullName>
    </alternativeName>
</protein>
<organism>
    <name type="scientific">Arabidopsis thaliana</name>
    <name type="common">Mouse-ear cress</name>
    <dbReference type="NCBI Taxonomy" id="3702"/>
    <lineage>
        <taxon>Eukaryota</taxon>
        <taxon>Viridiplantae</taxon>
        <taxon>Streptophyta</taxon>
        <taxon>Embryophyta</taxon>
        <taxon>Tracheophyta</taxon>
        <taxon>Spermatophyta</taxon>
        <taxon>Magnoliopsida</taxon>
        <taxon>eudicotyledons</taxon>
        <taxon>Gunneridae</taxon>
        <taxon>Pentapetalae</taxon>
        <taxon>rosids</taxon>
        <taxon>malvids</taxon>
        <taxon>Brassicales</taxon>
        <taxon>Brassicaceae</taxon>
        <taxon>Camelineae</taxon>
        <taxon>Arabidopsis</taxon>
    </lineage>
</organism>
<name>RIR2C_ARATH</name>
<proteinExistence type="evidence at protein level"/>
<gene>
    <name type="primary">TSO2</name>
    <name type="ordered locus">At3g27060</name>
    <name type="ORF">MOJ10.13</name>
</gene>